<gene>
    <name evidence="1" type="primary">ybeY</name>
    <name type="ordered locus">Bpet3656</name>
</gene>
<protein>
    <recommendedName>
        <fullName evidence="1">Endoribonuclease YbeY</fullName>
        <ecNumber evidence="1">3.1.-.-</ecNumber>
    </recommendedName>
</protein>
<keyword id="KW-0963">Cytoplasm</keyword>
<keyword id="KW-0255">Endonuclease</keyword>
<keyword id="KW-0378">Hydrolase</keyword>
<keyword id="KW-0479">Metal-binding</keyword>
<keyword id="KW-0540">Nuclease</keyword>
<keyword id="KW-0690">Ribosome biogenesis</keyword>
<keyword id="KW-0698">rRNA processing</keyword>
<keyword id="KW-0862">Zinc</keyword>
<feature type="chain" id="PRO_1000089155" description="Endoribonuclease YbeY">
    <location>
        <begin position="1"/>
        <end position="155"/>
    </location>
</feature>
<feature type="binding site" evidence="1">
    <location>
        <position position="118"/>
    </location>
    <ligand>
        <name>Zn(2+)</name>
        <dbReference type="ChEBI" id="CHEBI:29105"/>
        <note>catalytic</note>
    </ligand>
</feature>
<feature type="binding site" evidence="1">
    <location>
        <position position="122"/>
    </location>
    <ligand>
        <name>Zn(2+)</name>
        <dbReference type="ChEBI" id="CHEBI:29105"/>
        <note>catalytic</note>
    </ligand>
</feature>
<feature type="binding site" evidence="1">
    <location>
        <position position="128"/>
    </location>
    <ligand>
        <name>Zn(2+)</name>
        <dbReference type="ChEBI" id="CHEBI:29105"/>
        <note>catalytic</note>
    </ligand>
</feature>
<sequence>MNPELSLSVQYGVAEPRLPRWRLRRWAQRALDGAARDGLAECARAELSLRLVGQAEGRRLNHAYRERDYATNVLTFEYGTDPLGTARGDIVICVPVLAREAREQGKTLLDHAAHLTVHGVLHALGYDHIKARDARRMEALETAILTGMRIADPYA</sequence>
<proteinExistence type="inferred from homology"/>
<evidence type="ECO:0000255" key="1">
    <source>
        <dbReference type="HAMAP-Rule" id="MF_00009"/>
    </source>
</evidence>
<organism>
    <name type="scientific">Bordetella petrii (strain ATCC BAA-461 / DSM 12804 / CCUG 43448)</name>
    <dbReference type="NCBI Taxonomy" id="340100"/>
    <lineage>
        <taxon>Bacteria</taxon>
        <taxon>Pseudomonadati</taxon>
        <taxon>Pseudomonadota</taxon>
        <taxon>Betaproteobacteria</taxon>
        <taxon>Burkholderiales</taxon>
        <taxon>Alcaligenaceae</taxon>
        <taxon>Bordetella</taxon>
    </lineage>
</organism>
<reference key="1">
    <citation type="journal article" date="2008" name="BMC Genomics">
        <title>The missing link: Bordetella petrii is endowed with both the metabolic versatility of environmental bacteria and virulence traits of pathogenic Bordetellae.</title>
        <authorList>
            <person name="Gross R."/>
            <person name="Guzman C.A."/>
            <person name="Sebaihia M."/>
            <person name="Martin dos Santos V.A.P."/>
            <person name="Pieper D.H."/>
            <person name="Koebnik R."/>
            <person name="Lechner M."/>
            <person name="Bartels D."/>
            <person name="Buhrmester J."/>
            <person name="Choudhuri J.V."/>
            <person name="Ebensen T."/>
            <person name="Gaigalat L."/>
            <person name="Herrmann S."/>
            <person name="Khachane A.N."/>
            <person name="Larisch C."/>
            <person name="Link S."/>
            <person name="Linke B."/>
            <person name="Meyer F."/>
            <person name="Mormann S."/>
            <person name="Nakunst D."/>
            <person name="Rueckert C."/>
            <person name="Schneiker-Bekel S."/>
            <person name="Schulze K."/>
            <person name="Voerholter F.-J."/>
            <person name="Yevsa T."/>
            <person name="Engle J.T."/>
            <person name="Goldman W.E."/>
            <person name="Puehler A."/>
            <person name="Goebel U.B."/>
            <person name="Goesmann A."/>
            <person name="Bloecker H."/>
            <person name="Kaiser O."/>
            <person name="Martinez-Arias R."/>
        </authorList>
    </citation>
    <scope>NUCLEOTIDE SEQUENCE [LARGE SCALE GENOMIC DNA]</scope>
    <source>
        <strain>ATCC BAA-461 / DSM 12804 / CCUG 43448</strain>
    </source>
</reference>
<name>YBEY_BORPD</name>
<dbReference type="EC" id="3.1.-.-" evidence="1"/>
<dbReference type="EMBL" id="AM902716">
    <property type="protein sequence ID" value="CAP43999.1"/>
    <property type="molecule type" value="Genomic_DNA"/>
</dbReference>
<dbReference type="SMR" id="A9I000"/>
<dbReference type="STRING" id="94624.Bpet3656"/>
<dbReference type="KEGG" id="bpt:Bpet3656"/>
<dbReference type="eggNOG" id="COG0319">
    <property type="taxonomic scope" value="Bacteria"/>
</dbReference>
<dbReference type="Proteomes" id="UP000001225">
    <property type="component" value="Chromosome"/>
</dbReference>
<dbReference type="GO" id="GO:0005737">
    <property type="term" value="C:cytoplasm"/>
    <property type="evidence" value="ECO:0007669"/>
    <property type="project" value="UniProtKB-SubCell"/>
</dbReference>
<dbReference type="GO" id="GO:0004222">
    <property type="term" value="F:metalloendopeptidase activity"/>
    <property type="evidence" value="ECO:0007669"/>
    <property type="project" value="InterPro"/>
</dbReference>
<dbReference type="GO" id="GO:0004521">
    <property type="term" value="F:RNA endonuclease activity"/>
    <property type="evidence" value="ECO:0007669"/>
    <property type="project" value="UniProtKB-UniRule"/>
</dbReference>
<dbReference type="GO" id="GO:0008270">
    <property type="term" value="F:zinc ion binding"/>
    <property type="evidence" value="ECO:0007669"/>
    <property type="project" value="UniProtKB-UniRule"/>
</dbReference>
<dbReference type="GO" id="GO:0006364">
    <property type="term" value="P:rRNA processing"/>
    <property type="evidence" value="ECO:0007669"/>
    <property type="project" value="UniProtKB-UniRule"/>
</dbReference>
<dbReference type="Gene3D" id="3.40.390.30">
    <property type="entry name" value="Metalloproteases ('zincins'), catalytic domain"/>
    <property type="match status" value="1"/>
</dbReference>
<dbReference type="HAMAP" id="MF_00009">
    <property type="entry name" value="Endoribonucl_YbeY"/>
    <property type="match status" value="1"/>
</dbReference>
<dbReference type="InterPro" id="IPR023091">
    <property type="entry name" value="MetalPrtase_cat_dom_sf_prd"/>
</dbReference>
<dbReference type="InterPro" id="IPR002036">
    <property type="entry name" value="YbeY"/>
</dbReference>
<dbReference type="InterPro" id="IPR020549">
    <property type="entry name" value="YbeY_CS"/>
</dbReference>
<dbReference type="NCBIfam" id="TIGR00043">
    <property type="entry name" value="rRNA maturation RNase YbeY"/>
    <property type="match status" value="1"/>
</dbReference>
<dbReference type="PANTHER" id="PTHR46986">
    <property type="entry name" value="ENDORIBONUCLEASE YBEY, CHLOROPLASTIC"/>
    <property type="match status" value="1"/>
</dbReference>
<dbReference type="PANTHER" id="PTHR46986:SF1">
    <property type="entry name" value="ENDORIBONUCLEASE YBEY, CHLOROPLASTIC"/>
    <property type="match status" value="1"/>
</dbReference>
<dbReference type="Pfam" id="PF02130">
    <property type="entry name" value="YbeY"/>
    <property type="match status" value="1"/>
</dbReference>
<dbReference type="SUPFAM" id="SSF55486">
    <property type="entry name" value="Metalloproteases ('zincins'), catalytic domain"/>
    <property type="match status" value="1"/>
</dbReference>
<dbReference type="PROSITE" id="PS01306">
    <property type="entry name" value="UPF0054"/>
    <property type="match status" value="1"/>
</dbReference>
<comment type="function">
    <text evidence="1">Single strand-specific metallo-endoribonuclease involved in late-stage 70S ribosome quality control and in maturation of the 3' terminus of the 16S rRNA.</text>
</comment>
<comment type="cofactor">
    <cofactor evidence="1">
        <name>Zn(2+)</name>
        <dbReference type="ChEBI" id="CHEBI:29105"/>
    </cofactor>
    <text evidence="1">Binds 1 zinc ion.</text>
</comment>
<comment type="subcellular location">
    <subcellularLocation>
        <location evidence="1">Cytoplasm</location>
    </subcellularLocation>
</comment>
<comment type="similarity">
    <text evidence="1">Belongs to the endoribonuclease YbeY family.</text>
</comment>
<accession>A9I000</accession>